<comment type="function">
    <text evidence="2 3">Catalyzes the formation of 5-oxoproline from gamma-glutamyl dipeptides and may play a significant role in glutathione homeostasis (PubMed:18515354). Induces release of cytochrome c from mitochondria with resultant induction of apoptosis (PubMed:16765912).</text>
</comment>
<comment type="catalytic activity">
    <reaction evidence="3">
        <text>an alpha-(gamma-L-glutamyl)-L-amino acid = 5-oxo-L-proline + an L-alpha-amino acid</text>
        <dbReference type="Rhea" id="RHEA:20505"/>
        <dbReference type="ChEBI" id="CHEBI:58402"/>
        <dbReference type="ChEBI" id="CHEBI:59869"/>
        <dbReference type="ChEBI" id="CHEBI:71304"/>
        <dbReference type="EC" id="4.3.2.9"/>
    </reaction>
    <physiologicalReaction direction="left-to-right" evidence="7">
        <dbReference type="Rhea" id="RHEA:20506"/>
    </physiologicalReaction>
</comment>
<comment type="biophysicochemical properties">
    <kinetics>
        <KM evidence="3">2 mM for gamma-glutamyl-L-alanine</KM>
        <Vmax evidence="3">50.3 umol/min/mg enzyme</Vmax>
    </kinetics>
</comment>
<comment type="subunit">
    <text evidence="6 7">Homodimer.</text>
</comment>
<comment type="alternative products">
    <event type="alternative splicing"/>
    <isoform>
        <id>O75223-1</id>
        <name>1</name>
        <sequence type="displayed"/>
    </isoform>
    <isoform>
        <id>O75223-2</id>
        <name>2</name>
        <sequence type="described" ref="VSP_035599 VSP_035600"/>
    </isoform>
    <isoform>
        <id>O75223-3</id>
        <name>3</name>
        <sequence type="described" ref="VSP_046463"/>
    </isoform>
    <isoform>
        <id>O75223-4</id>
        <name>4</name>
        <sequence type="described" ref="VSP_046464"/>
    </isoform>
</comment>
<comment type="induction">
    <text evidence="2">By geranylgeraniol.</text>
</comment>
<comment type="similarity">
    <text evidence="5">Belongs to the gamma-glutamylcyclotransferase family.</text>
</comment>
<name>GGCT_HUMAN</name>
<feature type="chain" id="PRO_0000089580" description="Gamma-glutamylcyclotransferase">
    <location>
        <begin position="1"/>
        <end position="188"/>
    </location>
</feature>
<feature type="active site" description="Proton acceptor" evidence="3">
    <location>
        <position position="98"/>
    </location>
</feature>
<feature type="binding site" evidence="7">
    <location>
        <begin position="19"/>
        <end position="24"/>
    </location>
    <ligand>
        <name>substrate</name>
    </ligand>
</feature>
<feature type="binding site" evidence="7">
    <location>
        <position position="139"/>
    </location>
    <ligand>
        <name>substrate</name>
    </ligand>
</feature>
<feature type="modified residue" description="Phosphoserine" evidence="1">
    <location>
        <position position="173"/>
    </location>
</feature>
<feature type="splice variant" id="VSP_046463" description="In isoform 3." evidence="5">
    <location>
        <begin position="48"/>
        <end position="141"/>
    </location>
</feature>
<feature type="splice variant" id="VSP_046464" description="In isoform 4." evidence="5">
    <original>QEGVKSGMYVVIEVKVATQEGKEITCRSYLMTNYESAPPSPQYKKIICMGAKENGLPLEYQEKLKAIEPNDYTGKVSEEIEDIIKKGETQTL</original>
    <variation>WRKKRHTAFQNQGNHPCKHKTRMWDRDPKIPVQNLSLALCWQAQSGHGTCNRLFAWVQKKMVCRWSIKRS</variation>
    <location>
        <begin position="97"/>
        <end position="188"/>
    </location>
</feature>
<feature type="splice variant" id="VSP_035599" description="In isoform 2." evidence="4">
    <original>QEGVKSGMYVVIEVKVAT</original>
    <variation>LFAWVQKKMVCRWSIKRS</variation>
    <location>
        <begin position="97"/>
        <end position="114"/>
    </location>
</feature>
<feature type="splice variant" id="VSP_035600" description="In isoform 2." evidence="4">
    <location>
        <begin position="115"/>
        <end position="188"/>
    </location>
</feature>
<feature type="mutagenesis site" description="Marked decrease in catalytic efficiency." evidence="3">
    <original>G</original>
    <variation>A</variation>
    <location>
        <position position="23"/>
    </location>
</feature>
<feature type="mutagenesis site" description="Abolishes activity without altering structure." evidence="3">
    <original>E</original>
    <variation>A</variation>
    <variation>Q</variation>
    <location>
        <position position="98"/>
    </location>
</feature>
<feature type="mutagenesis site" description="Marked decrease in catalytic efficiency and specific activity." evidence="3">
    <original>Y</original>
    <variation>F</variation>
    <location>
        <position position="105"/>
    </location>
</feature>
<feature type="mutagenesis site" description="Little or no change in reaction kinetics." evidence="3">
    <original>Y</original>
    <variation>F</variation>
    <location>
        <position position="125"/>
    </location>
</feature>
<feature type="strand" evidence="9">
    <location>
        <begin position="16"/>
        <end position="21"/>
    </location>
</feature>
<feature type="helix" evidence="9">
    <location>
        <begin position="24"/>
        <end position="26"/>
    </location>
</feature>
<feature type="helix" evidence="9">
    <location>
        <begin position="28"/>
        <end position="34"/>
    </location>
</feature>
<feature type="strand" evidence="9">
    <location>
        <begin position="39"/>
        <end position="56"/>
    </location>
</feature>
<feature type="turn" evidence="9">
    <location>
        <begin position="62"/>
        <end position="64"/>
    </location>
</feature>
<feature type="strand" evidence="9">
    <location>
        <begin position="68"/>
        <end position="87"/>
    </location>
</feature>
<feature type="helix" evidence="9">
    <location>
        <begin position="88"/>
        <end position="90"/>
    </location>
</feature>
<feature type="helix" evidence="9">
    <location>
        <begin position="91"/>
        <end position="97"/>
    </location>
</feature>
<feature type="helix" evidence="9">
    <location>
        <begin position="100"/>
        <end position="102"/>
    </location>
</feature>
<feature type="strand" evidence="9">
    <location>
        <begin position="106"/>
        <end position="114"/>
    </location>
</feature>
<feature type="strand" evidence="9">
    <location>
        <begin position="119"/>
        <end position="126"/>
    </location>
</feature>
<feature type="strand" evidence="9">
    <location>
        <begin position="128"/>
        <end position="132"/>
    </location>
</feature>
<feature type="helix" evidence="9">
    <location>
        <begin position="137"/>
        <end position="149"/>
    </location>
</feature>
<feature type="helix" evidence="9">
    <location>
        <begin position="154"/>
        <end position="161"/>
    </location>
</feature>
<feature type="helix" evidence="9">
    <location>
        <begin position="174"/>
        <end position="181"/>
    </location>
</feature>
<sequence length="188" mass="21008">MANSGCKDVTGPDEESFLYFAYGSNLLTERIHLRNPSAAFFCVARLQDFKLDFGNSQGKTSQTWHGGIATIFQSPGDEVWGVVWKMNKSNLNSLDEQEGVKSGMYVVIEVKVATQEGKEITCRSYLMTNYESAPPSPQYKKIICMGAKENGLPLEYQEKLKAIEPNDYTGKVSEEIEDIIKKGETQTL</sequence>
<proteinExistence type="evidence at protein level"/>
<accession>O75223</accession>
<accession>B2RDN0</accession>
<accession>B8ZZN4</accession>
<accession>B8ZZR8</accession>
<accession>Q9BS37</accession>
<reference key="1">
    <citation type="journal article" date="2004" name="Nat. Genet.">
        <title>Complete sequencing and characterization of 21,243 full-length human cDNAs.</title>
        <authorList>
            <person name="Ota T."/>
            <person name="Suzuki Y."/>
            <person name="Nishikawa T."/>
            <person name="Otsuki T."/>
            <person name="Sugiyama T."/>
            <person name="Irie R."/>
            <person name="Wakamatsu A."/>
            <person name="Hayashi K."/>
            <person name="Sato H."/>
            <person name="Nagai K."/>
            <person name="Kimura K."/>
            <person name="Makita H."/>
            <person name="Sekine M."/>
            <person name="Obayashi M."/>
            <person name="Nishi T."/>
            <person name="Shibahara T."/>
            <person name="Tanaka T."/>
            <person name="Ishii S."/>
            <person name="Yamamoto J."/>
            <person name="Saito K."/>
            <person name="Kawai Y."/>
            <person name="Isono Y."/>
            <person name="Nakamura Y."/>
            <person name="Nagahari K."/>
            <person name="Murakami K."/>
            <person name="Yasuda T."/>
            <person name="Iwayanagi T."/>
            <person name="Wagatsuma M."/>
            <person name="Shiratori A."/>
            <person name="Sudo H."/>
            <person name="Hosoiri T."/>
            <person name="Kaku Y."/>
            <person name="Kodaira H."/>
            <person name="Kondo H."/>
            <person name="Sugawara M."/>
            <person name="Takahashi M."/>
            <person name="Kanda K."/>
            <person name="Yokoi T."/>
            <person name="Furuya T."/>
            <person name="Kikkawa E."/>
            <person name="Omura Y."/>
            <person name="Abe K."/>
            <person name="Kamihara K."/>
            <person name="Katsuta N."/>
            <person name="Sato K."/>
            <person name="Tanikawa M."/>
            <person name="Yamazaki M."/>
            <person name="Ninomiya K."/>
            <person name="Ishibashi T."/>
            <person name="Yamashita H."/>
            <person name="Murakawa K."/>
            <person name="Fujimori K."/>
            <person name="Tanai H."/>
            <person name="Kimata M."/>
            <person name="Watanabe M."/>
            <person name="Hiraoka S."/>
            <person name="Chiba Y."/>
            <person name="Ishida S."/>
            <person name="Ono Y."/>
            <person name="Takiguchi S."/>
            <person name="Watanabe S."/>
            <person name="Yosida M."/>
            <person name="Hotuta T."/>
            <person name="Kusano J."/>
            <person name="Kanehori K."/>
            <person name="Takahashi-Fujii A."/>
            <person name="Hara H."/>
            <person name="Tanase T.-O."/>
            <person name="Nomura Y."/>
            <person name="Togiya S."/>
            <person name="Komai F."/>
            <person name="Hara R."/>
            <person name="Takeuchi K."/>
            <person name="Arita M."/>
            <person name="Imose N."/>
            <person name="Musashino K."/>
            <person name="Yuuki H."/>
            <person name="Oshima A."/>
            <person name="Sasaki N."/>
            <person name="Aotsuka S."/>
            <person name="Yoshikawa Y."/>
            <person name="Matsunawa H."/>
            <person name="Ichihara T."/>
            <person name="Shiohata N."/>
            <person name="Sano S."/>
            <person name="Moriya S."/>
            <person name="Momiyama H."/>
            <person name="Satoh N."/>
            <person name="Takami S."/>
            <person name="Terashima Y."/>
            <person name="Suzuki O."/>
            <person name="Nakagawa S."/>
            <person name="Senoh A."/>
            <person name="Mizoguchi H."/>
            <person name="Goto Y."/>
            <person name="Shimizu F."/>
            <person name="Wakebe H."/>
            <person name="Hishigaki H."/>
            <person name="Watanabe T."/>
            <person name="Sugiyama A."/>
            <person name="Takemoto M."/>
            <person name="Kawakami B."/>
            <person name="Yamazaki M."/>
            <person name="Watanabe K."/>
            <person name="Kumagai A."/>
            <person name="Itakura S."/>
            <person name="Fukuzumi Y."/>
            <person name="Fujimori Y."/>
            <person name="Komiyama M."/>
            <person name="Tashiro H."/>
            <person name="Tanigami A."/>
            <person name="Fujiwara T."/>
            <person name="Ono T."/>
            <person name="Yamada K."/>
            <person name="Fujii Y."/>
            <person name="Ozaki K."/>
            <person name="Hirao M."/>
            <person name="Ohmori Y."/>
            <person name="Kawabata A."/>
            <person name="Hikiji T."/>
            <person name="Kobatake N."/>
            <person name="Inagaki H."/>
            <person name="Ikema Y."/>
            <person name="Okamoto S."/>
            <person name="Okitani R."/>
            <person name="Kawakami T."/>
            <person name="Noguchi S."/>
            <person name="Itoh T."/>
            <person name="Shigeta K."/>
            <person name="Senba T."/>
            <person name="Matsumura K."/>
            <person name="Nakajima Y."/>
            <person name="Mizuno T."/>
            <person name="Morinaga M."/>
            <person name="Sasaki M."/>
            <person name="Togashi T."/>
            <person name="Oyama M."/>
            <person name="Hata H."/>
            <person name="Watanabe M."/>
            <person name="Komatsu T."/>
            <person name="Mizushima-Sugano J."/>
            <person name="Satoh T."/>
            <person name="Shirai Y."/>
            <person name="Takahashi Y."/>
            <person name="Nakagawa K."/>
            <person name="Okumura K."/>
            <person name="Nagase T."/>
            <person name="Nomura N."/>
            <person name="Kikuchi H."/>
            <person name="Masuho Y."/>
            <person name="Yamashita R."/>
            <person name="Nakai K."/>
            <person name="Yada T."/>
            <person name="Nakamura Y."/>
            <person name="Ohara O."/>
            <person name="Isogai T."/>
            <person name="Sugano S."/>
        </authorList>
    </citation>
    <scope>NUCLEOTIDE SEQUENCE [LARGE SCALE MRNA] (ISOFORM 1)</scope>
    <source>
        <tissue>Skeletal muscle</tissue>
    </source>
</reference>
<reference key="2">
    <citation type="journal article" date="2003" name="Nature">
        <title>The DNA sequence of human chromosome 7.</title>
        <authorList>
            <person name="Hillier L.W."/>
            <person name="Fulton R.S."/>
            <person name="Fulton L.A."/>
            <person name="Graves T.A."/>
            <person name="Pepin K.H."/>
            <person name="Wagner-McPherson C."/>
            <person name="Layman D."/>
            <person name="Maas J."/>
            <person name="Jaeger S."/>
            <person name="Walker R."/>
            <person name="Wylie K."/>
            <person name="Sekhon M."/>
            <person name="Becker M.C."/>
            <person name="O'Laughlin M.D."/>
            <person name="Schaller M.E."/>
            <person name="Fewell G.A."/>
            <person name="Delehaunty K.D."/>
            <person name="Miner T.L."/>
            <person name="Nash W.E."/>
            <person name="Cordes M."/>
            <person name="Du H."/>
            <person name="Sun H."/>
            <person name="Edwards J."/>
            <person name="Bradshaw-Cordum H."/>
            <person name="Ali J."/>
            <person name="Andrews S."/>
            <person name="Isak A."/>
            <person name="Vanbrunt A."/>
            <person name="Nguyen C."/>
            <person name="Du F."/>
            <person name="Lamar B."/>
            <person name="Courtney L."/>
            <person name="Kalicki J."/>
            <person name="Ozersky P."/>
            <person name="Bielicki L."/>
            <person name="Scott K."/>
            <person name="Holmes A."/>
            <person name="Harkins R."/>
            <person name="Harris A."/>
            <person name="Strong C.M."/>
            <person name="Hou S."/>
            <person name="Tomlinson C."/>
            <person name="Dauphin-Kohlberg S."/>
            <person name="Kozlowicz-Reilly A."/>
            <person name="Leonard S."/>
            <person name="Rohlfing T."/>
            <person name="Rock S.M."/>
            <person name="Tin-Wollam A.-M."/>
            <person name="Abbott A."/>
            <person name="Minx P."/>
            <person name="Maupin R."/>
            <person name="Strowmatt C."/>
            <person name="Latreille P."/>
            <person name="Miller N."/>
            <person name="Johnson D."/>
            <person name="Murray J."/>
            <person name="Woessner J.P."/>
            <person name="Wendl M.C."/>
            <person name="Yang S.-P."/>
            <person name="Schultz B.R."/>
            <person name="Wallis J.W."/>
            <person name="Spieth J."/>
            <person name="Bieri T.A."/>
            <person name="Nelson J.O."/>
            <person name="Berkowicz N."/>
            <person name="Wohldmann P.E."/>
            <person name="Cook L.L."/>
            <person name="Hickenbotham M.T."/>
            <person name="Eldred J."/>
            <person name="Williams D."/>
            <person name="Bedell J.A."/>
            <person name="Mardis E.R."/>
            <person name="Clifton S.W."/>
            <person name="Chissoe S.L."/>
            <person name="Marra M.A."/>
            <person name="Raymond C."/>
            <person name="Haugen E."/>
            <person name="Gillett W."/>
            <person name="Zhou Y."/>
            <person name="James R."/>
            <person name="Phelps K."/>
            <person name="Iadanoto S."/>
            <person name="Bubb K."/>
            <person name="Simms E."/>
            <person name="Levy R."/>
            <person name="Clendenning J."/>
            <person name="Kaul R."/>
            <person name="Kent W.J."/>
            <person name="Furey T.S."/>
            <person name="Baertsch R.A."/>
            <person name="Brent M.R."/>
            <person name="Keibler E."/>
            <person name="Flicek P."/>
            <person name="Bork P."/>
            <person name="Suyama M."/>
            <person name="Bailey J.A."/>
            <person name="Portnoy M.E."/>
            <person name="Torrents D."/>
            <person name="Chinwalla A.T."/>
            <person name="Gish W.R."/>
            <person name="Eddy S.R."/>
            <person name="McPherson J.D."/>
            <person name="Olson M.V."/>
            <person name="Eichler E.E."/>
            <person name="Green E.D."/>
            <person name="Waterston R.H."/>
            <person name="Wilson R.K."/>
        </authorList>
    </citation>
    <scope>NUCLEOTIDE SEQUENCE [LARGE SCALE GENOMIC DNA]</scope>
</reference>
<reference key="3">
    <citation type="submission" date="2005-07" db="EMBL/GenBank/DDBJ databases">
        <authorList>
            <person name="Mural R.J."/>
            <person name="Istrail S."/>
            <person name="Sutton G.G."/>
            <person name="Florea L."/>
            <person name="Halpern A.L."/>
            <person name="Mobarry C.M."/>
            <person name="Lippert R."/>
            <person name="Walenz B."/>
            <person name="Shatkay H."/>
            <person name="Dew I."/>
            <person name="Miller J.R."/>
            <person name="Flanigan M.J."/>
            <person name="Edwards N.J."/>
            <person name="Bolanos R."/>
            <person name="Fasulo D."/>
            <person name="Halldorsson B.V."/>
            <person name="Hannenhalli S."/>
            <person name="Turner R."/>
            <person name="Yooseph S."/>
            <person name="Lu F."/>
            <person name="Nusskern D.R."/>
            <person name="Shue B.C."/>
            <person name="Zheng X.H."/>
            <person name="Zhong F."/>
            <person name="Delcher A.L."/>
            <person name="Huson D.H."/>
            <person name="Kravitz S.A."/>
            <person name="Mouchard L."/>
            <person name="Reinert K."/>
            <person name="Remington K.A."/>
            <person name="Clark A.G."/>
            <person name="Waterman M.S."/>
            <person name="Eichler E.E."/>
            <person name="Adams M.D."/>
            <person name="Hunkapiller M.W."/>
            <person name="Myers E.W."/>
            <person name="Venter J.C."/>
        </authorList>
    </citation>
    <scope>NUCLEOTIDE SEQUENCE [LARGE SCALE GENOMIC DNA]</scope>
</reference>
<reference key="4">
    <citation type="journal article" date="2004" name="Genome Res.">
        <title>The status, quality, and expansion of the NIH full-length cDNA project: the Mammalian Gene Collection (MGC).</title>
        <authorList>
            <consortium name="The MGC Project Team"/>
        </authorList>
    </citation>
    <scope>NUCLEOTIDE SEQUENCE [LARGE SCALE MRNA] (ISOFORMS 1 AND 2)</scope>
    <source>
        <tissue>Kidney</tissue>
        <tissue>Lung</tissue>
        <tissue>Skin</tissue>
        <tissue>Urinary bladder</tissue>
    </source>
</reference>
<reference key="5">
    <citation type="journal article" date="2006" name="Biochem. Biophys. Res. Commun.">
        <title>A novel 21-kDa cytochrome c-releasing factor is generated upon treatment of human leukemia U937 cells with geranylgeraniol.</title>
        <authorList>
            <person name="Masuda Y."/>
            <person name="Maeda S."/>
            <person name="Watanabe A."/>
            <person name="Sano Y."/>
            <person name="Aiuchi T."/>
            <person name="Nakajo S."/>
            <person name="Itabe H."/>
            <person name="Nakaya K."/>
        </authorList>
    </citation>
    <scope>IDENTIFICATION BY MASS SPECTROMETRY</scope>
    <scope>FUNCTION</scope>
    <scope>INDUCTION</scope>
</reference>
<reference key="6">
    <citation type="journal article" date="2011" name="BMC Syst. Biol.">
        <title>Initial characterization of the human central proteome.</title>
        <authorList>
            <person name="Burkard T.R."/>
            <person name="Planyavsky M."/>
            <person name="Kaupe I."/>
            <person name="Breitwieser F.P."/>
            <person name="Buerckstuemmer T."/>
            <person name="Bennett K.L."/>
            <person name="Superti-Furga G."/>
            <person name="Colinge J."/>
        </authorList>
    </citation>
    <scope>IDENTIFICATION BY MASS SPECTROMETRY [LARGE SCALE ANALYSIS]</scope>
</reference>
<reference key="7">
    <citation type="journal article" date="2008" name="J. Biol. Chem.">
        <title>The identification and structural characterization of C7orf24 as gamma-glutamyl cyclotransferase: an essential enzyme in the gamma-glutamyl cycle.</title>
        <authorList>
            <person name="Oakley A.J."/>
            <person name="Yamada T."/>
            <person name="Liu D."/>
            <person name="Coggan M."/>
            <person name="Clark A.G."/>
            <person name="Board P.G."/>
        </authorList>
    </citation>
    <scope>X-RAY CRYSTALLOGRAPHY (1.70 ANGSTROMS)</scope>
    <scope>IDENTIFICATION BY MASS SPECTROMETRY</scope>
    <scope>FUNCTION</scope>
    <scope>SUBUNIT</scope>
    <scope>ACTIVE SITE</scope>
    <scope>MUTAGENESIS OF GLY-23; GLU-98; TYR-105 AND TYR-125</scope>
    <scope>CATALYTIC ACTIVITY</scope>
    <scope>BIOPHYSICOCHEMICAL PROPERTIES</scope>
</reference>
<reference key="8">
    <citation type="journal article" date="2008" name="Proteins">
        <title>Crystal structure of Homo sapiens protein LOC79017.</title>
        <authorList>
            <person name="Bae E."/>
            <person name="Bingman C.A."/>
            <person name="Aceti D.J."/>
            <person name="Phillips G.N. Jr."/>
        </authorList>
    </citation>
    <scope>X-RAY CRYSTALLOGRAPHY (2.01 ANGSTROMS) OF 2-188</scope>
    <scope>SUBUNIT</scope>
</reference>
<organism>
    <name type="scientific">Homo sapiens</name>
    <name type="common">Human</name>
    <dbReference type="NCBI Taxonomy" id="9606"/>
    <lineage>
        <taxon>Eukaryota</taxon>
        <taxon>Metazoa</taxon>
        <taxon>Chordata</taxon>
        <taxon>Craniata</taxon>
        <taxon>Vertebrata</taxon>
        <taxon>Euteleostomi</taxon>
        <taxon>Mammalia</taxon>
        <taxon>Eutheria</taxon>
        <taxon>Euarchontoglires</taxon>
        <taxon>Primates</taxon>
        <taxon>Haplorrhini</taxon>
        <taxon>Catarrhini</taxon>
        <taxon>Hominidae</taxon>
        <taxon>Homo</taxon>
    </lineage>
</organism>
<protein>
    <recommendedName>
        <fullName evidence="5">Gamma-glutamylcyclotransferase</fullName>
        <ecNumber evidence="3">4.3.2.9</ecNumber>
    </recommendedName>
    <alternativeName>
        <fullName>Cytochrome c-releasing factor 21</fullName>
    </alternativeName>
</protein>
<keyword id="KW-0002">3D-structure</keyword>
<keyword id="KW-0025">Alternative splicing</keyword>
<keyword id="KW-0456">Lyase</keyword>
<keyword id="KW-0597">Phosphoprotein</keyword>
<keyword id="KW-1267">Proteomics identification</keyword>
<keyword id="KW-1185">Reference proteome</keyword>
<gene>
    <name evidence="8" type="primary">GGCT</name>
    <name type="synonym">C7orf24</name>
    <name type="synonym">CRF21</name>
</gene>
<evidence type="ECO:0000250" key="1">
    <source>
        <dbReference type="UniProtKB" id="Q9D7X8"/>
    </source>
</evidence>
<evidence type="ECO:0000269" key="2">
    <source>
    </source>
</evidence>
<evidence type="ECO:0000269" key="3">
    <source>
    </source>
</evidence>
<evidence type="ECO:0000303" key="4">
    <source>
    </source>
</evidence>
<evidence type="ECO:0000305" key="5"/>
<evidence type="ECO:0000305" key="6">
    <source>
    </source>
</evidence>
<evidence type="ECO:0000305" key="7">
    <source>
    </source>
</evidence>
<evidence type="ECO:0000312" key="8">
    <source>
        <dbReference type="HGNC" id="HGNC:21705"/>
    </source>
</evidence>
<evidence type="ECO:0007829" key="9">
    <source>
        <dbReference type="PDB" id="3CRY"/>
    </source>
</evidence>
<dbReference type="EC" id="4.3.2.9" evidence="3"/>
<dbReference type="EMBL" id="AK315608">
    <property type="protein sequence ID" value="BAG37977.1"/>
    <property type="molecule type" value="mRNA"/>
</dbReference>
<dbReference type="EMBL" id="AC005154">
    <property type="status" value="NOT_ANNOTATED_CDS"/>
    <property type="molecule type" value="Genomic_DNA"/>
</dbReference>
<dbReference type="EMBL" id="CH471073">
    <property type="protein sequence ID" value="EAW93950.1"/>
    <property type="molecule type" value="Genomic_DNA"/>
</dbReference>
<dbReference type="EMBL" id="CH471073">
    <property type="protein sequence ID" value="EAW93952.1"/>
    <property type="molecule type" value="Genomic_DNA"/>
</dbReference>
<dbReference type="EMBL" id="CH471073">
    <property type="protein sequence ID" value="EAW93953.1"/>
    <property type="molecule type" value="Genomic_DNA"/>
</dbReference>
<dbReference type="EMBL" id="BC000625">
    <property type="protein sequence ID" value="AAH00625.1"/>
    <property type="molecule type" value="mRNA"/>
</dbReference>
<dbReference type="EMBL" id="BC005356">
    <property type="protein sequence ID" value="AAH05356.1"/>
    <property type="molecule type" value="mRNA"/>
</dbReference>
<dbReference type="EMBL" id="BC013937">
    <property type="protein sequence ID" value="AAH13937.1"/>
    <property type="molecule type" value="mRNA"/>
</dbReference>
<dbReference type="EMBL" id="BC019243">
    <property type="protein sequence ID" value="AAH19243.1"/>
    <property type="molecule type" value="mRNA"/>
</dbReference>
<dbReference type="CCDS" id="CCDS5428.1">
    <molecule id="O75223-1"/>
</dbReference>
<dbReference type="CCDS" id="CCDS56474.1">
    <molecule id="O75223-3"/>
</dbReference>
<dbReference type="CCDS" id="CCDS56475.1">
    <molecule id="O75223-2"/>
</dbReference>
<dbReference type="CCDS" id="CCDS56476.1">
    <molecule id="O75223-4"/>
</dbReference>
<dbReference type="RefSeq" id="NP_001186744.1">
    <molecule id="O75223-4"/>
    <property type="nucleotide sequence ID" value="NM_001199815.2"/>
</dbReference>
<dbReference type="RefSeq" id="NP_001186745.1">
    <molecule id="O75223-2"/>
    <property type="nucleotide sequence ID" value="NM_001199816.2"/>
</dbReference>
<dbReference type="RefSeq" id="NP_001186746.1">
    <molecule id="O75223-3"/>
    <property type="nucleotide sequence ID" value="NM_001199817.2"/>
</dbReference>
<dbReference type="RefSeq" id="NP_076956.1">
    <molecule id="O75223-1"/>
    <property type="nucleotide sequence ID" value="NM_024051.4"/>
</dbReference>
<dbReference type="PDB" id="2I5T">
    <property type="method" value="X-ray"/>
    <property type="resolution" value="2.01 A"/>
    <property type="chains" value="A/B=2-188"/>
</dbReference>
<dbReference type="PDB" id="2PN7">
    <property type="method" value="X-ray"/>
    <property type="resolution" value="2.41 A"/>
    <property type="chains" value="A/B=1-188"/>
</dbReference>
<dbReference type="PDB" id="2Q53">
    <property type="method" value="X-ray"/>
    <property type="resolution" value="2.01 A"/>
    <property type="chains" value="A/B=2-188"/>
</dbReference>
<dbReference type="PDB" id="2RBH">
    <property type="method" value="X-ray"/>
    <property type="resolution" value="2.10 A"/>
    <property type="chains" value="A/B=1-188"/>
</dbReference>
<dbReference type="PDB" id="3CRY">
    <property type="method" value="X-ray"/>
    <property type="resolution" value="1.70 A"/>
    <property type="chains" value="A/B=1-188"/>
</dbReference>
<dbReference type="PDBsum" id="2I5T"/>
<dbReference type="PDBsum" id="2PN7"/>
<dbReference type="PDBsum" id="2Q53"/>
<dbReference type="PDBsum" id="2RBH"/>
<dbReference type="PDBsum" id="3CRY"/>
<dbReference type="SMR" id="O75223"/>
<dbReference type="BioGRID" id="122486">
    <property type="interactions" value="77"/>
</dbReference>
<dbReference type="FunCoup" id="O75223">
    <property type="interactions" value="320"/>
</dbReference>
<dbReference type="IntAct" id="O75223">
    <property type="interactions" value="20"/>
</dbReference>
<dbReference type="MINT" id="O75223"/>
<dbReference type="STRING" id="9606.ENSP00000275428"/>
<dbReference type="GuidetoPHARMACOLOGY" id="1392"/>
<dbReference type="GlyGen" id="O75223">
    <property type="glycosylation" value="1 site, 1 O-linked glycan (1 site)"/>
</dbReference>
<dbReference type="iPTMnet" id="O75223"/>
<dbReference type="PhosphoSitePlus" id="O75223"/>
<dbReference type="SwissPalm" id="O75223"/>
<dbReference type="BioMuta" id="GGCT"/>
<dbReference type="OGP" id="O75223"/>
<dbReference type="CPTAC" id="CPTAC-514"/>
<dbReference type="CPTAC" id="CPTAC-515"/>
<dbReference type="jPOST" id="O75223"/>
<dbReference type="MassIVE" id="O75223"/>
<dbReference type="PaxDb" id="9606-ENSP00000275428"/>
<dbReference type="PeptideAtlas" id="O75223"/>
<dbReference type="ProteomicsDB" id="49871">
    <molecule id="O75223-1"/>
</dbReference>
<dbReference type="ProteomicsDB" id="49872">
    <molecule id="O75223-2"/>
</dbReference>
<dbReference type="ProteomicsDB" id="7409"/>
<dbReference type="ProteomicsDB" id="7425"/>
<dbReference type="Antibodypedia" id="12613">
    <property type="antibodies" value="186 antibodies from 31 providers"/>
</dbReference>
<dbReference type="DNASU" id="79017"/>
<dbReference type="Ensembl" id="ENST00000005374.10">
    <molecule id="O75223-2"/>
    <property type="protein sequence ID" value="ENSP00000005374.6"/>
    <property type="gene ID" value="ENSG00000006625.18"/>
</dbReference>
<dbReference type="Ensembl" id="ENST00000275428.9">
    <molecule id="O75223-1"/>
    <property type="protein sequence ID" value="ENSP00000275428.4"/>
    <property type="gene ID" value="ENSG00000006625.18"/>
</dbReference>
<dbReference type="Ensembl" id="ENST00000409144.5">
    <molecule id="O75223-3"/>
    <property type="protein sequence ID" value="ENSP00000386610.1"/>
    <property type="gene ID" value="ENSG00000006625.18"/>
</dbReference>
<dbReference type="Ensembl" id="ENST00000409390.5">
    <molecule id="O75223-4"/>
    <property type="protein sequence ID" value="ENSP00000387235.1"/>
    <property type="gene ID" value="ENSG00000006625.18"/>
</dbReference>
<dbReference type="GeneID" id="79017"/>
<dbReference type="KEGG" id="hsa:79017"/>
<dbReference type="MANE-Select" id="ENST00000275428.9">
    <property type="protein sequence ID" value="ENSP00000275428.4"/>
    <property type="RefSeq nucleotide sequence ID" value="NM_024051.4"/>
    <property type="RefSeq protein sequence ID" value="NP_076956.1"/>
</dbReference>
<dbReference type="UCSC" id="uc003tba.4">
    <molecule id="O75223-1"/>
    <property type="organism name" value="human"/>
</dbReference>
<dbReference type="AGR" id="HGNC:21705"/>
<dbReference type="CTD" id="79017"/>
<dbReference type="DisGeNET" id="79017"/>
<dbReference type="GeneCards" id="GGCT"/>
<dbReference type="HGNC" id="HGNC:21705">
    <property type="gene designation" value="GGCT"/>
</dbReference>
<dbReference type="HPA" id="ENSG00000006625">
    <property type="expression patterns" value="Low tissue specificity"/>
</dbReference>
<dbReference type="MIM" id="137170">
    <property type="type" value="gene"/>
</dbReference>
<dbReference type="neXtProt" id="NX_O75223"/>
<dbReference type="OpenTargets" id="ENSG00000006625"/>
<dbReference type="PharmGKB" id="PA162389392"/>
<dbReference type="VEuPathDB" id="HostDB:ENSG00000006625"/>
<dbReference type="eggNOG" id="KOG4059">
    <property type="taxonomic scope" value="Eukaryota"/>
</dbReference>
<dbReference type="GeneTree" id="ENSGT00500000044921"/>
<dbReference type="HOGENOM" id="CLU_048475_2_1_1"/>
<dbReference type="InParanoid" id="O75223"/>
<dbReference type="OMA" id="APHDYVM"/>
<dbReference type="OrthoDB" id="2924818at2759"/>
<dbReference type="PAN-GO" id="O75223">
    <property type="GO annotations" value="1 GO annotation based on evolutionary models"/>
</dbReference>
<dbReference type="PhylomeDB" id="O75223"/>
<dbReference type="TreeFam" id="TF314378"/>
<dbReference type="BRENDA" id="4.3.2.9">
    <property type="organism ID" value="2681"/>
</dbReference>
<dbReference type="PathwayCommons" id="O75223"/>
<dbReference type="Reactome" id="R-HSA-174403">
    <property type="pathway name" value="Glutathione synthesis and recycling"/>
</dbReference>
<dbReference type="SignaLink" id="O75223"/>
<dbReference type="BioGRID-ORCS" id="79017">
    <property type="hits" value="10 hits in 1125 CRISPR screens"/>
</dbReference>
<dbReference type="ChiTaRS" id="GGCT">
    <property type="organism name" value="human"/>
</dbReference>
<dbReference type="EvolutionaryTrace" id="O75223"/>
<dbReference type="GenomeRNAi" id="79017"/>
<dbReference type="Pharos" id="O75223">
    <property type="development level" value="Tchem"/>
</dbReference>
<dbReference type="PRO" id="PR:O75223"/>
<dbReference type="Proteomes" id="UP000005640">
    <property type="component" value="Chromosome 7"/>
</dbReference>
<dbReference type="RNAct" id="O75223">
    <property type="molecule type" value="protein"/>
</dbReference>
<dbReference type="Bgee" id="ENSG00000006625">
    <property type="expression patterns" value="Expressed in mammalian vulva and 207 other cell types or tissues"/>
</dbReference>
<dbReference type="ExpressionAtlas" id="O75223">
    <property type="expression patterns" value="baseline and differential"/>
</dbReference>
<dbReference type="GO" id="GO:0005829">
    <property type="term" value="C:cytosol"/>
    <property type="evidence" value="ECO:0000314"/>
    <property type="project" value="UniProtKB"/>
</dbReference>
<dbReference type="GO" id="GO:0070062">
    <property type="term" value="C:extracellular exosome"/>
    <property type="evidence" value="ECO:0007005"/>
    <property type="project" value="UniProtKB"/>
</dbReference>
<dbReference type="GO" id="GO:0003839">
    <property type="term" value="F:gamma-glutamylcyclotransferase activity"/>
    <property type="evidence" value="ECO:0000314"/>
    <property type="project" value="UniProtKB"/>
</dbReference>
<dbReference type="GO" id="GO:0042803">
    <property type="term" value="F:protein homodimerization activity"/>
    <property type="evidence" value="ECO:0000314"/>
    <property type="project" value="UniProtKB"/>
</dbReference>
<dbReference type="GO" id="GO:0001836">
    <property type="term" value="P:release of cytochrome c from mitochondria"/>
    <property type="evidence" value="ECO:0000315"/>
    <property type="project" value="UniProtKB"/>
</dbReference>
<dbReference type="CDD" id="cd06661">
    <property type="entry name" value="GGCT_like"/>
    <property type="match status" value="1"/>
</dbReference>
<dbReference type="FunFam" id="3.10.490.10:FF:000007">
    <property type="entry name" value="Gamma-glutamylcyclotransferase"/>
    <property type="match status" value="1"/>
</dbReference>
<dbReference type="Gene3D" id="3.10.490.10">
    <property type="entry name" value="Gamma-glutamyl cyclotransferase-like"/>
    <property type="match status" value="1"/>
</dbReference>
<dbReference type="InterPro" id="IPR017939">
    <property type="entry name" value="G-Glutamylcylcotransferase"/>
</dbReference>
<dbReference type="InterPro" id="IPR013024">
    <property type="entry name" value="GGCT-like"/>
</dbReference>
<dbReference type="InterPro" id="IPR036568">
    <property type="entry name" value="GGCT-like_sf"/>
</dbReference>
<dbReference type="PANTHER" id="PTHR12935">
    <property type="entry name" value="GAMMA-GLUTAMYLCYCLOTRANSFERASE"/>
    <property type="match status" value="1"/>
</dbReference>
<dbReference type="PANTHER" id="PTHR12935:SF0">
    <property type="entry name" value="GAMMA-GLUTAMYLCYCLOTRANSFERASE"/>
    <property type="match status" value="1"/>
</dbReference>
<dbReference type="Pfam" id="PF13772">
    <property type="entry name" value="AIG2_2"/>
    <property type="match status" value="1"/>
</dbReference>
<dbReference type="SUPFAM" id="SSF110857">
    <property type="entry name" value="Gamma-glutamyl cyclotransferase-like"/>
    <property type="match status" value="1"/>
</dbReference>